<evidence type="ECO:0000255" key="1">
    <source>
        <dbReference type="HAMAP-Rule" id="MF_02208"/>
    </source>
</evidence>
<dbReference type="EC" id="6.3.2.53" evidence="1"/>
<dbReference type="EMBL" id="AE008922">
    <property type="protein sequence ID" value="AAM42010.1"/>
    <property type="molecule type" value="Genomic_DNA"/>
</dbReference>
<dbReference type="RefSeq" id="NP_638086.1">
    <property type="nucleotide sequence ID" value="NC_003902.1"/>
</dbReference>
<dbReference type="SMR" id="Q8P775"/>
<dbReference type="STRING" id="190485.XCC2738"/>
<dbReference type="EnsemblBacteria" id="AAM42010">
    <property type="protein sequence ID" value="AAM42010"/>
    <property type="gene ID" value="XCC2738"/>
</dbReference>
<dbReference type="KEGG" id="xcc:XCC2738"/>
<dbReference type="PATRIC" id="fig|190485.4.peg.2923"/>
<dbReference type="eggNOG" id="COG0771">
    <property type="taxonomic scope" value="Bacteria"/>
</dbReference>
<dbReference type="HOGENOM" id="CLU_032540_4_1_6"/>
<dbReference type="OrthoDB" id="9809796at2"/>
<dbReference type="UniPathway" id="UPA00219"/>
<dbReference type="Proteomes" id="UP000001010">
    <property type="component" value="Chromosome"/>
</dbReference>
<dbReference type="GO" id="GO:0005737">
    <property type="term" value="C:cytoplasm"/>
    <property type="evidence" value="ECO:0007669"/>
    <property type="project" value="UniProtKB-SubCell"/>
</dbReference>
<dbReference type="GO" id="GO:0005524">
    <property type="term" value="F:ATP binding"/>
    <property type="evidence" value="ECO:0007669"/>
    <property type="project" value="UniProtKB-UniRule"/>
</dbReference>
<dbReference type="GO" id="GO:0004326">
    <property type="term" value="F:tetrahydrofolylpolyglutamate synthase activity"/>
    <property type="evidence" value="ECO:0007669"/>
    <property type="project" value="InterPro"/>
</dbReference>
<dbReference type="GO" id="GO:0008764">
    <property type="term" value="F:UDP-N-acetylmuramoylalanine-D-glutamate ligase activity"/>
    <property type="evidence" value="ECO:0007669"/>
    <property type="project" value="InterPro"/>
</dbReference>
<dbReference type="GO" id="GO:0051301">
    <property type="term" value="P:cell division"/>
    <property type="evidence" value="ECO:0007669"/>
    <property type="project" value="UniProtKB-KW"/>
</dbReference>
<dbReference type="GO" id="GO:0071555">
    <property type="term" value="P:cell wall organization"/>
    <property type="evidence" value="ECO:0007669"/>
    <property type="project" value="UniProtKB-KW"/>
</dbReference>
<dbReference type="GO" id="GO:0009252">
    <property type="term" value="P:peptidoglycan biosynthetic process"/>
    <property type="evidence" value="ECO:0007669"/>
    <property type="project" value="UniProtKB-UniRule"/>
</dbReference>
<dbReference type="GO" id="GO:0008360">
    <property type="term" value="P:regulation of cell shape"/>
    <property type="evidence" value="ECO:0007669"/>
    <property type="project" value="UniProtKB-KW"/>
</dbReference>
<dbReference type="Gene3D" id="3.90.190.20">
    <property type="entry name" value="Mur ligase, C-terminal domain"/>
    <property type="match status" value="1"/>
</dbReference>
<dbReference type="Gene3D" id="3.40.1190.10">
    <property type="entry name" value="Mur-like, catalytic domain"/>
    <property type="match status" value="1"/>
</dbReference>
<dbReference type="Gene3D" id="3.40.50.720">
    <property type="entry name" value="NAD(P)-binding Rossmann-like Domain"/>
    <property type="match status" value="1"/>
</dbReference>
<dbReference type="HAMAP" id="MF_00639">
    <property type="entry name" value="MurD"/>
    <property type="match status" value="1"/>
</dbReference>
<dbReference type="HAMAP" id="MF_02208">
    <property type="entry name" value="MurD2_subfam"/>
    <property type="match status" value="1"/>
</dbReference>
<dbReference type="InterPro" id="IPR018109">
    <property type="entry name" value="Folylpolyglutamate_synth_CS"/>
</dbReference>
<dbReference type="InterPro" id="IPR036565">
    <property type="entry name" value="Mur-like_cat_sf"/>
</dbReference>
<dbReference type="InterPro" id="IPR004101">
    <property type="entry name" value="Mur_ligase_C"/>
</dbReference>
<dbReference type="InterPro" id="IPR036615">
    <property type="entry name" value="Mur_ligase_C_dom_sf"/>
</dbReference>
<dbReference type="InterPro" id="IPR013221">
    <property type="entry name" value="Mur_ligase_cen"/>
</dbReference>
<dbReference type="InterPro" id="IPR005762">
    <property type="entry name" value="MurD"/>
</dbReference>
<dbReference type="InterPro" id="IPR043687">
    <property type="entry name" value="MurD2"/>
</dbReference>
<dbReference type="NCBIfam" id="TIGR01087">
    <property type="entry name" value="murD"/>
    <property type="match status" value="1"/>
</dbReference>
<dbReference type="PANTHER" id="PTHR43692">
    <property type="entry name" value="UDP-N-ACETYLMURAMOYLALANINE--D-GLUTAMATE LIGASE"/>
    <property type="match status" value="1"/>
</dbReference>
<dbReference type="PANTHER" id="PTHR43692:SF1">
    <property type="entry name" value="UDP-N-ACETYLMURAMOYLALANINE--D-GLUTAMATE LIGASE"/>
    <property type="match status" value="1"/>
</dbReference>
<dbReference type="Pfam" id="PF02875">
    <property type="entry name" value="Mur_ligase_C"/>
    <property type="match status" value="1"/>
</dbReference>
<dbReference type="Pfam" id="PF08245">
    <property type="entry name" value="Mur_ligase_M"/>
    <property type="match status" value="1"/>
</dbReference>
<dbReference type="SUPFAM" id="SSF53623">
    <property type="entry name" value="MurD-like peptide ligases, catalytic domain"/>
    <property type="match status" value="1"/>
</dbReference>
<dbReference type="SUPFAM" id="SSF53244">
    <property type="entry name" value="MurD-like peptide ligases, peptide-binding domain"/>
    <property type="match status" value="1"/>
</dbReference>
<keyword id="KW-0067">ATP-binding</keyword>
<keyword id="KW-0131">Cell cycle</keyword>
<keyword id="KW-0132">Cell division</keyword>
<keyword id="KW-0133">Cell shape</keyword>
<keyword id="KW-0961">Cell wall biogenesis/degradation</keyword>
<keyword id="KW-0963">Cytoplasm</keyword>
<keyword id="KW-0436">Ligase</keyword>
<keyword id="KW-0547">Nucleotide-binding</keyword>
<keyword id="KW-0573">Peptidoglycan synthesis</keyword>
<keyword id="KW-1185">Reference proteome</keyword>
<reference key="1">
    <citation type="journal article" date="2002" name="Nature">
        <title>Comparison of the genomes of two Xanthomonas pathogens with differing host specificities.</title>
        <authorList>
            <person name="da Silva A.C.R."/>
            <person name="Ferro J.A."/>
            <person name="Reinach F.C."/>
            <person name="Farah C.S."/>
            <person name="Furlan L.R."/>
            <person name="Quaggio R.B."/>
            <person name="Monteiro-Vitorello C.B."/>
            <person name="Van Sluys M.A."/>
            <person name="Almeida N.F. Jr."/>
            <person name="Alves L.M.C."/>
            <person name="do Amaral A.M."/>
            <person name="Bertolini M.C."/>
            <person name="Camargo L.E.A."/>
            <person name="Camarotte G."/>
            <person name="Cannavan F."/>
            <person name="Cardozo J."/>
            <person name="Chambergo F."/>
            <person name="Ciapina L.P."/>
            <person name="Cicarelli R.M.B."/>
            <person name="Coutinho L.L."/>
            <person name="Cursino-Santos J.R."/>
            <person name="El-Dorry H."/>
            <person name="Faria J.B."/>
            <person name="Ferreira A.J.S."/>
            <person name="Ferreira R.C.C."/>
            <person name="Ferro M.I.T."/>
            <person name="Formighieri E.F."/>
            <person name="Franco M.C."/>
            <person name="Greggio C.C."/>
            <person name="Gruber A."/>
            <person name="Katsuyama A.M."/>
            <person name="Kishi L.T."/>
            <person name="Leite R.P."/>
            <person name="Lemos E.G.M."/>
            <person name="Lemos M.V.F."/>
            <person name="Locali E.C."/>
            <person name="Machado M.A."/>
            <person name="Madeira A.M.B.N."/>
            <person name="Martinez-Rossi N.M."/>
            <person name="Martins E.C."/>
            <person name="Meidanis J."/>
            <person name="Menck C.F.M."/>
            <person name="Miyaki C.Y."/>
            <person name="Moon D.H."/>
            <person name="Moreira L.M."/>
            <person name="Novo M.T.M."/>
            <person name="Okura V.K."/>
            <person name="Oliveira M.C."/>
            <person name="Oliveira V.R."/>
            <person name="Pereira H.A."/>
            <person name="Rossi A."/>
            <person name="Sena J.A.D."/>
            <person name="Silva C."/>
            <person name="de Souza R.F."/>
            <person name="Spinola L.A.F."/>
            <person name="Takita M.A."/>
            <person name="Tamura R.E."/>
            <person name="Teixeira E.C."/>
            <person name="Tezza R.I.D."/>
            <person name="Trindade dos Santos M."/>
            <person name="Truffi D."/>
            <person name="Tsai S.M."/>
            <person name="White F.F."/>
            <person name="Setubal J.C."/>
            <person name="Kitajima J.P."/>
        </authorList>
    </citation>
    <scope>NUCLEOTIDE SEQUENCE [LARGE SCALE GENOMIC DNA]</scope>
    <source>
        <strain>ATCC 33913 / DSM 3586 / NCPPB 528 / LMG 568 / P 25</strain>
    </source>
</reference>
<sequence length="468" mass="49585">MRISQLEGKAVALWGWAREGRAAYRALRQQLPAQPLTVFCNAEEARDVAALADPALQVQTEASAQALAAFEVVIKSPGISPYREEARAAAAQGARFIGGTALWFAEHAQPDGYVPGAICVTGTKGKSTTTALLAHLLRADGHRTALVGNIGQPLLEVLSPQPPPAYWAIELSSYQTGEVGRSGARPELALVLNLFPEHLDWHGSEAAYVRDKLALVTDGRPRIALLNAADPHLAQLQLPESEVRWFNHPDGWHLRGDVVYRGQQPIFDTANVPLPGEHNRRNLCAVLAAVEALGLDAAALAPAALTFRPLPNRLQWLGSVDGIAYVNDSISTTPHASLAALACFAQQRVALLVGGHDRGLDWQEFAAHMAQQAPLEIVTMGANGPRIHALLAPLAQSAGFGLHAADDLAHAMQLARSALGAQGGVLLLSPGAPSFGVYSDYVARGRHFAQLAGFDPAAISAIPGLGVQ</sequence>
<gene>
    <name evidence="1" type="primary">murD2</name>
    <name type="ordered locus">XCC2738</name>
</gene>
<organism>
    <name type="scientific">Xanthomonas campestris pv. campestris (strain ATCC 33913 / DSM 3586 / NCPPB 528 / LMG 568 / P 25)</name>
    <dbReference type="NCBI Taxonomy" id="190485"/>
    <lineage>
        <taxon>Bacteria</taxon>
        <taxon>Pseudomonadati</taxon>
        <taxon>Pseudomonadota</taxon>
        <taxon>Gammaproteobacteria</taxon>
        <taxon>Lysobacterales</taxon>
        <taxon>Lysobacteraceae</taxon>
        <taxon>Xanthomonas</taxon>
    </lineage>
</organism>
<accession>Q8P775</accession>
<name>MURD2_XANCP</name>
<proteinExistence type="inferred from homology"/>
<feature type="chain" id="PRO_0000109127" description="UDP-N-acetylmuramoyl-L-alanine--L-glutamate ligase">
    <location>
        <begin position="1"/>
        <end position="468"/>
    </location>
</feature>
<feature type="binding site" evidence="1">
    <location>
        <begin position="122"/>
        <end position="128"/>
    </location>
    <ligand>
        <name>ATP</name>
        <dbReference type="ChEBI" id="CHEBI:30616"/>
    </ligand>
</feature>
<comment type="function">
    <text evidence="1">Cell wall formation. Catalyzes the addition of L-glutamate to the nucleotide precursor UDP-N-acetylmuramoyl-L-alanine.</text>
</comment>
<comment type="catalytic activity">
    <reaction evidence="1">
        <text>UDP-N-acetyl-alpha-D-muramoyl-L-alanine + L-glutamate + ATP = UDP-N-acetyl-alpha-D-muramoyl-L-alanyl-L-glutamate + ADP + phosphate + H(+)</text>
        <dbReference type="Rhea" id="RHEA:58816"/>
        <dbReference type="ChEBI" id="CHEBI:15378"/>
        <dbReference type="ChEBI" id="CHEBI:29985"/>
        <dbReference type="ChEBI" id="CHEBI:30616"/>
        <dbReference type="ChEBI" id="CHEBI:43474"/>
        <dbReference type="ChEBI" id="CHEBI:83898"/>
        <dbReference type="ChEBI" id="CHEBI:142725"/>
        <dbReference type="ChEBI" id="CHEBI:456216"/>
        <dbReference type="EC" id="6.3.2.53"/>
    </reaction>
</comment>
<comment type="pathway">
    <text evidence="1">Cell wall biogenesis; peptidoglycan biosynthesis.</text>
</comment>
<comment type="subcellular location">
    <subcellularLocation>
        <location evidence="1">Cytoplasm</location>
    </subcellularLocation>
</comment>
<comment type="similarity">
    <text evidence="1">Belongs to the MurCDEF family. MurD2 subfamily.</text>
</comment>
<protein>
    <recommendedName>
        <fullName evidence="1">UDP-N-acetylmuramoyl-L-alanine--L-glutamate ligase</fullName>
        <ecNumber evidence="1">6.3.2.53</ecNumber>
    </recommendedName>
    <alternativeName>
        <fullName evidence="1">UDP-N-acetylmuramoyl-L-alanyl-L-glutamate synthetase</fullName>
        <shortName evidence="1">UDP-MurNAc-L-Ala-L-Glu synthetase</shortName>
    </alternativeName>
</protein>